<evidence type="ECO:0000255" key="1">
    <source>
        <dbReference type="HAMAP-Rule" id="MF_00147"/>
    </source>
</evidence>
<gene>
    <name evidence="1" type="primary">tpiA</name>
    <name type="ordered locus">Pnuc_1053</name>
</gene>
<name>TPIS_POLAQ</name>
<proteinExistence type="inferred from homology"/>
<reference key="1">
    <citation type="journal article" date="2012" name="Stand. Genomic Sci.">
        <title>Complete genome sequence of Polynucleobacter necessarius subsp. asymbioticus type strain (QLW-P1DMWA-1(T)).</title>
        <authorList>
            <person name="Meincke L."/>
            <person name="Copeland A."/>
            <person name="Lapidus A."/>
            <person name="Lucas S."/>
            <person name="Berry K.W."/>
            <person name="Del Rio T.G."/>
            <person name="Hammon N."/>
            <person name="Dalin E."/>
            <person name="Tice H."/>
            <person name="Pitluck S."/>
            <person name="Richardson P."/>
            <person name="Bruce D."/>
            <person name="Goodwin L."/>
            <person name="Han C."/>
            <person name="Tapia R."/>
            <person name="Detter J.C."/>
            <person name="Schmutz J."/>
            <person name="Brettin T."/>
            <person name="Larimer F."/>
            <person name="Land M."/>
            <person name="Hauser L."/>
            <person name="Kyrpides N.C."/>
            <person name="Ivanova N."/>
            <person name="Goker M."/>
            <person name="Woyke T."/>
            <person name="Wu Q.L."/>
            <person name="Pockl M."/>
            <person name="Hahn M.W."/>
            <person name="Klenk H.P."/>
        </authorList>
    </citation>
    <scope>NUCLEOTIDE SEQUENCE [LARGE SCALE GENOMIC DNA]</scope>
    <source>
        <strain>DSM 18221 / CIP 109841 / QLW-P1DMWA-1</strain>
    </source>
</reference>
<dbReference type="EC" id="5.3.1.1" evidence="1"/>
<dbReference type="EMBL" id="CP000655">
    <property type="protein sequence ID" value="ABP34269.1"/>
    <property type="molecule type" value="Genomic_DNA"/>
</dbReference>
<dbReference type="RefSeq" id="WP_011902894.1">
    <property type="nucleotide sequence ID" value="NC_009379.1"/>
</dbReference>
<dbReference type="SMR" id="A4SXQ5"/>
<dbReference type="GeneID" id="31481428"/>
<dbReference type="KEGG" id="pnu:Pnuc_1053"/>
<dbReference type="eggNOG" id="COG0149">
    <property type="taxonomic scope" value="Bacteria"/>
</dbReference>
<dbReference type="HOGENOM" id="CLU_024251_2_1_4"/>
<dbReference type="UniPathway" id="UPA00109">
    <property type="reaction ID" value="UER00189"/>
</dbReference>
<dbReference type="UniPathway" id="UPA00138"/>
<dbReference type="Proteomes" id="UP000000231">
    <property type="component" value="Chromosome"/>
</dbReference>
<dbReference type="GO" id="GO:0005829">
    <property type="term" value="C:cytosol"/>
    <property type="evidence" value="ECO:0007669"/>
    <property type="project" value="TreeGrafter"/>
</dbReference>
<dbReference type="GO" id="GO:0004807">
    <property type="term" value="F:triose-phosphate isomerase activity"/>
    <property type="evidence" value="ECO:0007669"/>
    <property type="project" value="UniProtKB-UniRule"/>
</dbReference>
<dbReference type="GO" id="GO:0006094">
    <property type="term" value="P:gluconeogenesis"/>
    <property type="evidence" value="ECO:0007669"/>
    <property type="project" value="UniProtKB-UniRule"/>
</dbReference>
<dbReference type="GO" id="GO:0046166">
    <property type="term" value="P:glyceraldehyde-3-phosphate biosynthetic process"/>
    <property type="evidence" value="ECO:0007669"/>
    <property type="project" value="TreeGrafter"/>
</dbReference>
<dbReference type="GO" id="GO:0019563">
    <property type="term" value="P:glycerol catabolic process"/>
    <property type="evidence" value="ECO:0007669"/>
    <property type="project" value="TreeGrafter"/>
</dbReference>
<dbReference type="GO" id="GO:0006096">
    <property type="term" value="P:glycolytic process"/>
    <property type="evidence" value="ECO:0007669"/>
    <property type="project" value="UniProtKB-UniRule"/>
</dbReference>
<dbReference type="CDD" id="cd00311">
    <property type="entry name" value="TIM"/>
    <property type="match status" value="1"/>
</dbReference>
<dbReference type="FunFam" id="3.20.20.70:FF:000016">
    <property type="entry name" value="Triosephosphate isomerase"/>
    <property type="match status" value="1"/>
</dbReference>
<dbReference type="Gene3D" id="3.20.20.70">
    <property type="entry name" value="Aldolase class I"/>
    <property type="match status" value="1"/>
</dbReference>
<dbReference type="HAMAP" id="MF_00147_B">
    <property type="entry name" value="TIM_B"/>
    <property type="match status" value="1"/>
</dbReference>
<dbReference type="InterPro" id="IPR013785">
    <property type="entry name" value="Aldolase_TIM"/>
</dbReference>
<dbReference type="InterPro" id="IPR035990">
    <property type="entry name" value="TIM_sf"/>
</dbReference>
<dbReference type="InterPro" id="IPR022896">
    <property type="entry name" value="TrioseP_Isoase_bac/euk"/>
</dbReference>
<dbReference type="InterPro" id="IPR000652">
    <property type="entry name" value="Triosephosphate_isomerase"/>
</dbReference>
<dbReference type="InterPro" id="IPR020861">
    <property type="entry name" value="Triosephosphate_isomerase_AS"/>
</dbReference>
<dbReference type="NCBIfam" id="TIGR00419">
    <property type="entry name" value="tim"/>
    <property type="match status" value="1"/>
</dbReference>
<dbReference type="PANTHER" id="PTHR21139">
    <property type="entry name" value="TRIOSEPHOSPHATE ISOMERASE"/>
    <property type="match status" value="1"/>
</dbReference>
<dbReference type="PANTHER" id="PTHR21139:SF42">
    <property type="entry name" value="TRIOSEPHOSPHATE ISOMERASE"/>
    <property type="match status" value="1"/>
</dbReference>
<dbReference type="Pfam" id="PF00121">
    <property type="entry name" value="TIM"/>
    <property type="match status" value="1"/>
</dbReference>
<dbReference type="SUPFAM" id="SSF51351">
    <property type="entry name" value="Triosephosphate isomerase (TIM)"/>
    <property type="match status" value="1"/>
</dbReference>
<dbReference type="PROSITE" id="PS00171">
    <property type="entry name" value="TIM_1"/>
    <property type="match status" value="1"/>
</dbReference>
<dbReference type="PROSITE" id="PS51440">
    <property type="entry name" value="TIM_2"/>
    <property type="match status" value="1"/>
</dbReference>
<protein>
    <recommendedName>
        <fullName evidence="1">Triosephosphate isomerase</fullName>
        <shortName evidence="1">TIM</shortName>
        <shortName evidence="1">TPI</shortName>
        <ecNumber evidence="1">5.3.1.1</ecNumber>
    </recommendedName>
    <alternativeName>
        <fullName evidence="1">Triose-phosphate isomerase</fullName>
    </alternativeName>
</protein>
<keyword id="KW-0963">Cytoplasm</keyword>
<keyword id="KW-0312">Gluconeogenesis</keyword>
<keyword id="KW-0324">Glycolysis</keyword>
<keyword id="KW-0413">Isomerase</keyword>
<keyword id="KW-1185">Reference proteome</keyword>
<accession>A4SXQ5</accession>
<feature type="chain" id="PRO_1000076654" description="Triosephosphate isomerase">
    <location>
        <begin position="1"/>
        <end position="252"/>
    </location>
</feature>
<feature type="active site" description="Electrophile" evidence="1">
    <location>
        <position position="100"/>
    </location>
</feature>
<feature type="active site" description="Proton acceptor" evidence="1">
    <location>
        <position position="171"/>
    </location>
</feature>
<feature type="binding site" evidence="1">
    <location>
        <begin position="9"/>
        <end position="11"/>
    </location>
    <ligand>
        <name>substrate</name>
    </ligand>
</feature>
<feature type="binding site" evidence="1">
    <location>
        <position position="177"/>
    </location>
    <ligand>
        <name>substrate</name>
    </ligand>
</feature>
<feature type="binding site" evidence="1">
    <location>
        <position position="216"/>
    </location>
    <ligand>
        <name>substrate</name>
    </ligand>
</feature>
<feature type="binding site" evidence="1">
    <location>
        <begin position="237"/>
        <end position="238"/>
    </location>
    <ligand>
        <name>substrate</name>
    </ligand>
</feature>
<organism>
    <name type="scientific">Polynucleobacter asymbioticus (strain DSM 18221 / CIP 109841 / QLW-P1DMWA-1)</name>
    <name type="common">Polynucleobacter necessarius subsp. asymbioticus</name>
    <dbReference type="NCBI Taxonomy" id="312153"/>
    <lineage>
        <taxon>Bacteria</taxon>
        <taxon>Pseudomonadati</taxon>
        <taxon>Pseudomonadota</taxon>
        <taxon>Betaproteobacteria</taxon>
        <taxon>Burkholderiales</taxon>
        <taxon>Burkholderiaceae</taxon>
        <taxon>Polynucleobacter</taxon>
    </lineage>
</organism>
<comment type="function">
    <text evidence="1">Involved in the gluconeogenesis. Catalyzes stereospecifically the conversion of dihydroxyacetone phosphate (DHAP) to D-glyceraldehyde-3-phosphate (G3P).</text>
</comment>
<comment type="catalytic activity">
    <reaction evidence="1">
        <text>D-glyceraldehyde 3-phosphate = dihydroxyacetone phosphate</text>
        <dbReference type="Rhea" id="RHEA:18585"/>
        <dbReference type="ChEBI" id="CHEBI:57642"/>
        <dbReference type="ChEBI" id="CHEBI:59776"/>
        <dbReference type="EC" id="5.3.1.1"/>
    </reaction>
</comment>
<comment type="pathway">
    <text evidence="1">Carbohydrate biosynthesis; gluconeogenesis.</text>
</comment>
<comment type="pathway">
    <text evidence="1">Carbohydrate degradation; glycolysis; D-glyceraldehyde 3-phosphate from glycerone phosphate: step 1/1.</text>
</comment>
<comment type="subunit">
    <text evidence="1">Homodimer.</text>
</comment>
<comment type="subcellular location">
    <subcellularLocation>
        <location evidence="1">Cytoplasm</location>
    </subcellularLocation>
</comment>
<comment type="similarity">
    <text evidence="1">Belongs to the triosephosphate isomerase family.</text>
</comment>
<sequence length="252" mass="26816">MRPLIVIGNWKMNGNLASNQDWVKTVARGMESGMPAGRKFAVCPSFPYLSQCSTLIKEHSLAFLSLGAQDVSAHGAGAYTGEVGASMLKEMGCEYVIVGHSERRQMHQEADESVAAKALQALDSGMTPVICVGETADERNSGRAEEIVCSQVAKQVSVLQDRLADCLIAYEPVWAIGTGKVASAQVAQDMHRAIRMQLAEFDEDVASHVGILYGGSVKPDNAVELFAMPDIDGGLVGGASLNPQDFLAICQA</sequence>